<name>AROB_SALPA</name>
<accession>Q5PLX2</accession>
<organism>
    <name type="scientific">Salmonella paratyphi A (strain ATCC 9150 / SARB42)</name>
    <dbReference type="NCBI Taxonomy" id="295319"/>
    <lineage>
        <taxon>Bacteria</taxon>
        <taxon>Pseudomonadati</taxon>
        <taxon>Pseudomonadota</taxon>
        <taxon>Gammaproteobacteria</taxon>
        <taxon>Enterobacterales</taxon>
        <taxon>Enterobacteriaceae</taxon>
        <taxon>Salmonella</taxon>
    </lineage>
</organism>
<keyword id="KW-0028">Amino-acid biosynthesis</keyword>
<keyword id="KW-0057">Aromatic amino acid biosynthesis</keyword>
<keyword id="KW-0170">Cobalt</keyword>
<keyword id="KW-0963">Cytoplasm</keyword>
<keyword id="KW-0456">Lyase</keyword>
<keyword id="KW-0479">Metal-binding</keyword>
<keyword id="KW-0520">NAD</keyword>
<keyword id="KW-0547">Nucleotide-binding</keyword>
<keyword id="KW-0862">Zinc</keyword>
<proteinExistence type="inferred from homology"/>
<sequence>MERITVTLGERSYPITIAAGLFNEPASFLPLKSGDQVMLVTNETLAPLYLDKVRGVLERAGVNVDSVILPDGEQYKSLTVLDTVFTALLKKPHGRDTTLVALGGGVIGDLTGFAAASYQRGVRFIQVPTTLLSQVDSSVGGKTAVNHPLGKNMIGAFYQPASVVVDLDCLKTLPARELASGLAEVIKYGIILDADFFTWLEGNLDALLRLDGPAMAYCIRRCCELKAEVVAADEREAGLRALLNLGHTFGHAIEAEMGYGNWLHGEAVAAGIVMAARASERLGQFSSADTQRIIALLERAGLPVNGPCEMSAQDYLPHMLRDKKVLAGELRLVLPLAIGKSEVRGGVSHEVVLSAIADCQQA</sequence>
<reference key="1">
    <citation type="journal article" date="2004" name="Nat. Genet.">
        <title>Comparison of genome degradation in Paratyphi A and Typhi, human-restricted serovars of Salmonella enterica that cause typhoid.</title>
        <authorList>
            <person name="McClelland M."/>
            <person name="Sanderson K.E."/>
            <person name="Clifton S.W."/>
            <person name="Latreille P."/>
            <person name="Porwollik S."/>
            <person name="Sabo A."/>
            <person name="Meyer R."/>
            <person name="Bieri T."/>
            <person name="Ozersky P."/>
            <person name="McLellan M."/>
            <person name="Harkins C.R."/>
            <person name="Wang C."/>
            <person name="Nguyen C."/>
            <person name="Berghoff A."/>
            <person name="Elliott G."/>
            <person name="Kohlberg S."/>
            <person name="Strong C."/>
            <person name="Du F."/>
            <person name="Carter J."/>
            <person name="Kremizki C."/>
            <person name="Layman D."/>
            <person name="Leonard S."/>
            <person name="Sun H."/>
            <person name="Fulton L."/>
            <person name="Nash W."/>
            <person name="Miner T."/>
            <person name="Minx P."/>
            <person name="Delehaunty K."/>
            <person name="Fronick C."/>
            <person name="Magrini V."/>
            <person name="Nhan M."/>
            <person name="Warren W."/>
            <person name="Florea L."/>
            <person name="Spieth J."/>
            <person name="Wilson R.K."/>
        </authorList>
    </citation>
    <scope>NUCLEOTIDE SEQUENCE [LARGE SCALE GENOMIC DNA]</scope>
    <source>
        <strain>ATCC 9150 / SARB42</strain>
    </source>
</reference>
<evidence type="ECO:0000255" key="1">
    <source>
        <dbReference type="HAMAP-Rule" id="MF_00110"/>
    </source>
</evidence>
<protein>
    <recommendedName>
        <fullName evidence="1">3-dehydroquinate synthase</fullName>
        <shortName evidence="1">DHQS</shortName>
        <ecNumber evidence="1">4.2.3.4</ecNumber>
    </recommendedName>
</protein>
<feature type="chain" id="PRO_0000231124" description="3-dehydroquinate synthase">
    <location>
        <begin position="1"/>
        <end position="362"/>
    </location>
</feature>
<feature type="binding site" evidence="1">
    <location>
        <begin position="71"/>
        <end position="76"/>
    </location>
    <ligand>
        <name>NAD(+)</name>
        <dbReference type="ChEBI" id="CHEBI:57540"/>
    </ligand>
</feature>
<feature type="binding site" evidence="1">
    <location>
        <begin position="105"/>
        <end position="109"/>
    </location>
    <ligand>
        <name>NAD(+)</name>
        <dbReference type="ChEBI" id="CHEBI:57540"/>
    </ligand>
</feature>
<feature type="binding site" evidence="1">
    <location>
        <begin position="129"/>
        <end position="130"/>
    </location>
    <ligand>
        <name>NAD(+)</name>
        <dbReference type="ChEBI" id="CHEBI:57540"/>
    </ligand>
</feature>
<feature type="binding site" evidence="1">
    <location>
        <position position="142"/>
    </location>
    <ligand>
        <name>NAD(+)</name>
        <dbReference type="ChEBI" id="CHEBI:57540"/>
    </ligand>
</feature>
<feature type="binding site" evidence="1">
    <location>
        <position position="151"/>
    </location>
    <ligand>
        <name>NAD(+)</name>
        <dbReference type="ChEBI" id="CHEBI:57540"/>
    </ligand>
</feature>
<feature type="binding site" evidence="1">
    <location>
        <begin position="169"/>
        <end position="172"/>
    </location>
    <ligand>
        <name>NAD(+)</name>
        <dbReference type="ChEBI" id="CHEBI:57540"/>
    </ligand>
</feature>
<feature type="binding site" evidence="1">
    <location>
        <position position="184"/>
    </location>
    <ligand>
        <name>Zn(2+)</name>
        <dbReference type="ChEBI" id="CHEBI:29105"/>
    </ligand>
</feature>
<feature type="binding site" evidence="1">
    <location>
        <position position="247"/>
    </location>
    <ligand>
        <name>Zn(2+)</name>
        <dbReference type="ChEBI" id="CHEBI:29105"/>
    </ligand>
</feature>
<feature type="binding site" evidence="1">
    <location>
        <position position="264"/>
    </location>
    <ligand>
        <name>Zn(2+)</name>
        <dbReference type="ChEBI" id="CHEBI:29105"/>
    </ligand>
</feature>
<comment type="function">
    <text evidence="1">Catalyzes the conversion of 3-deoxy-D-arabino-heptulosonate 7-phosphate (DAHP) to dehydroquinate (DHQ).</text>
</comment>
<comment type="catalytic activity">
    <reaction evidence="1">
        <text>7-phospho-2-dehydro-3-deoxy-D-arabino-heptonate = 3-dehydroquinate + phosphate</text>
        <dbReference type="Rhea" id="RHEA:21968"/>
        <dbReference type="ChEBI" id="CHEBI:32364"/>
        <dbReference type="ChEBI" id="CHEBI:43474"/>
        <dbReference type="ChEBI" id="CHEBI:58394"/>
        <dbReference type="EC" id="4.2.3.4"/>
    </reaction>
</comment>
<comment type="cofactor">
    <cofactor evidence="1">
        <name>Co(2+)</name>
        <dbReference type="ChEBI" id="CHEBI:48828"/>
    </cofactor>
    <cofactor evidence="1">
        <name>Zn(2+)</name>
        <dbReference type="ChEBI" id="CHEBI:29105"/>
    </cofactor>
    <text evidence="1">Binds 1 divalent metal cation per subunit. Can use either Co(2+) or Zn(2+).</text>
</comment>
<comment type="cofactor">
    <cofactor evidence="1">
        <name>NAD(+)</name>
        <dbReference type="ChEBI" id="CHEBI:57540"/>
    </cofactor>
</comment>
<comment type="pathway">
    <text evidence="1">Metabolic intermediate biosynthesis; chorismate biosynthesis; chorismate from D-erythrose 4-phosphate and phosphoenolpyruvate: step 2/7.</text>
</comment>
<comment type="subcellular location">
    <subcellularLocation>
        <location evidence="1">Cytoplasm</location>
    </subcellularLocation>
</comment>
<comment type="similarity">
    <text evidence="1">Belongs to the sugar phosphate cyclases superfamily. Dehydroquinate synthase family.</text>
</comment>
<dbReference type="EC" id="4.2.3.4" evidence="1"/>
<dbReference type="EMBL" id="CP000026">
    <property type="protein sequence ID" value="AAV79165.1"/>
    <property type="molecule type" value="Genomic_DNA"/>
</dbReference>
<dbReference type="RefSeq" id="WP_000439824.1">
    <property type="nucleotide sequence ID" value="NC_006511.1"/>
</dbReference>
<dbReference type="SMR" id="Q5PLX2"/>
<dbReference type="KEGG" id="spt:SPA3351"/>
<dbReference type="HOGENOM" id="CLU_001201_0_2_6"/>
<dbReference type="UniPathway" id="UPA00053">
    <property type="reaction ID" value="UER00085"/>
</dbReference>
<dbReference type="Proteomes" id="UP000008185">
    <property type="component" value="Chromosome"/>
</dbReference>
<dbReference type="GO" id="GO:0005737">
    <property type="term" value="C:cytoplasm"/>
    <property type="evidence" value="ECO:0007669"/>
    <property type="project" value="UniProtKB-SubCell"/>
</dbReference>
<dbReference type="GO" id="GO:0003856">
    <property type="term" value="F:3-dehydroquinate synthase activity"/>
    <property type="evidence" value="ECO:0007669"/>
    <property type="project" value="UniProtKB-UniRule"/>
</dbReference>
<dbReference type="GO" id="GO:0046872">
    <property type="term" value="F:metal ion binding"/>
    <property type="evidence" value="ECO:0007669"/>
    <property type="project" value="UniProtKB-KW"/>
</dbReference>
<dbReference type="GO" id="GO:0000166">
    <property type="term" value="F:nucleotide binding"/>
    <property type="evidence" value="ECO:0007669"/>
    <property type="project" value="UniProtKB-KW"/>
</dbReference>
<dbReference type="GO" id="GO:0008652">
    <property type="term" value="P:amino acid biosynthetic process"/>
    <property type="evidence" value="ECO:0007669"/>
    <property type="project" value="UniProtKB-KW"/>
</dbReference>
<dbReference type="GO" id="GO:0009073">
    <property type="term" value="P:aromatic amino acid family biosynthetic process"/>
    <property type="evidence" value="ECO:0007669"/>
    <property type="project" value="UniProtKB-KW"/>
</dbReference>
<dbReference type="GO" id="GO:0009423">
    <property type="term" value="P:chorismate biosynthetic process"/>
    <property type="evidence" value="ECO:0007669"/>
    <property type="project" value="UniProtKB-UniRule"/>
</dbReference>
<dbReference type="CDD" id="cd08195">
    <property type="entry name" value="DHQS"/>
    <property type="match status" value="1"/>
</dbReference>
<dbReference type="FunFam" id="1.20.1090.10:FF:000002">
    <property type="entry name" value="3-dehydroquinate synthase"/>
    <property type="match status" value="1"/>
</dbReference>
<dbReference type="FunFam" id="3.40.50.1970:FF:000001">
    <property type="entry name" value="3-dehydroquinate synthase"/>
    <property type="match status" value="1"/>
</dbReference>
<dbReference type="Gene3D" id="3.40.50.1970">
    <property type="match status" value="1"/>
</dbReference>
<dbReference type="Gene3D" id="1.20.1090.10">
    <property type="entry name" value="Dehydroquinate synthase-like - alpha domain"/>
    <property type="match status" value="1"/>
</dbReference>
<dbReference type="HAMAP" id="MF_00110">
    <property type="entry name" value="DHQ_synthase"/>
    <property type="match status" value="1"/>
</dbReference>
<dbReference type="InterPro" id="IPR050071">
    <property type="entry name" value="Dehydroquinate_synthase"/>
</dbReference>
<dbReference type="InterPro" id="IPR016037">
    <property type="entry name" value="DHQ_synth_AroB"/>
</dbReference>
<dbReference type="InterPro" id="IPR030963">
    <property type="entry name" value="DHQ_synth_fam"/>
</dbReference>
<dbReference type="InterPro" id="IPR030960">
    <property type="entry name" value="DHQS/DOIS_N"/>
</dbReference>
<dbReference type="InterPro" id="IPR056179">
    <property type="entry name" value="DHQS_C"/>
</dbReference>
<dbReference type="NCBIfam" id="TIGR01357">
    <property type="entry name" value="aroB"/>
    <property type="match status" value="1"/>
</dbReference>
<dbReference type="PANTHER" id="PTHR43622">
    <property type="entry name" value="3-DEHYDROQUINATE SYNTHASE"/>
    <property type="match status" value="1"/>
</dbReference>
<dbReference type="PANTHER" id="PTHR43622:SF7">
    <property type="entry name" value="3-DEHYDROQUINATE SYNTHASE, CHLOROPLASTIC"/>
    <property type="match status" value="1"/>
</dbReference>
<dbReference type="Pfam" id="PF01761">
    <property type="entry name" value="DHQ_synthase"/>
    <property type="match status" value="1"/>
</dbReference>
<dbReference type="Pfam" id="PF24621">
    <property type="entry name" value="DHQS_C"/>
    <property type="match status" value="1"/>
</dbReference>
<dbReference type="PIRSF" id="PIRSF001455">
    <property type="entry name" value="DHQ_synth"/>
    <property type="match status" value="1"/>
</dbReference>
<dbReference type="SUPFAM" id="SSF56796">
    <property type="entry name" value="Dehydroquinate synthase-like"/>
    <property type="match status" value="1"/>
</dbReference>
<gene>
    <name evidence="1" type="primary">aroB</name>
    <name type="ordered locus">SPA3351</name>
</gene>